<organism>
    <name type="scientific">Rhizobium meliloti (strain 1021)</name>
    <name type="common">Ensifer meliloti</name>
    <name type="synonym">Sinorhizobium meliloti</name>
    <dbReference type="NCBI Taxonomy" id="266834"/>
    <lineage>
        <taxon>Bacteria</taxon>
        <taxon>Pseudomonadati</taxon>
        <taxon>Pseudomonadota</taxon>
        <taxon>Alphaproteobacteria</taxon>
        <taxon>Hyphomicrobiales</taxon>
        <taxon>Rhizobiaceae</taxon>
        <taxon>Sinorhizobium/Ensifer group</taxon>
        <taxon>Sinorhizobium</taxon>
    </lineage>
</organism>
<proteinExistence type="inferred from homology"/>
<reference key="1">
    <citation type="journal article" date="1991" name="J. Bacteriol.">
        <title>Cloning and characterization of a Rhizobium meliloti homolog of the Escherichia coli cell division gene ftsZ.</title>
        <authorList>
            <person name="Margolin W."/>
            <person name="Corbo J.C."/>
            <person name="Long S.R."/>
        </authorList>
    </citation>
    <scope>NUCLEOTIDE SEQUENCE [GENOMIC DNA]</scope>
    <source>
        <strain>1021</strain>
    </source>
</reference>
<reference key="2">
    <citation type="journal article" date="1997" name="J. Bacteriol.">
        <title>Interactions between heterologous FtsA and FtsZ proteins at the FtsZ ring.</title>
        <authorList>
            <person name="Ma X."/>
            <person name="Sun Q."/>
            <person name="Wang R."/>
            <person name="Singh G."/>
            <person name="Jonietz E.L."/>
            <person name="Margolin W."/>
        </authorList>
    </citation>
    <scope>NUCLEOTIDE SEQUENCE [GENOMIC DNA]</scope>
    <source>
        <strain>1021</strain>
    </source>
</reference>
<reference key="3">
    <citation type="journal article" date="2001" name="Proc. Natl. Acad. Sci. U.S.A.">
        <title>Analysis of the chromosome sequence of the legume symbiont Sinorhizobium meliloti strain 1021.</title>
        <authorList>
            <person name="Capela D."/>
            <person name="Barloy-Hubler F."/>
            <person name="Gouzy J."/>
            <person name="Bothe G."/>
            <person name="Ampe F."/>
            <person name="Batut J."/>
            <person name="Boistard P."/>
            <person name="Becker A."/>
            <person name="Boutry M."/>
            <person name="Cadieu E."/>
            <person name="Dreano S."/>
            <person name="Gloux S."/>
            <person name="Godrie T."/>
            <person name="Goffeau A."/>
            <person name="Kahn D."/>
            <person name="Kiss E."/>
            <person name="Lelaure V."/>
            <person name="Masuy D."/>
            <person name="Pohl T."/>
            <person name="Portetelle D."/>
            <person name="Puehler A."/>
            <person name="Purnelle B."/>
            <person name="Ramsperger U."/>
            <person name="Renard C."/>
            <person name="Thebault P."/>
            <person name="Vandenbol M."/>
            <person name="Weidner S."/>
            <person name="Galibert F."/>
        </authorList>
    </citation>
    <scope>NUCLEOTIDE SEQUENCE [LARGE SCALE GENOMIC DNA]</scope>
    <source>
        <strain>1021</strain>
    </source>
</reference>
<reference key="4">
    <citation type="journal article" date="2001" name="Science">
        <title>The composite genome of the legume symbiont Sinorhizobium meliloti.</title>
        <authorList>
            <person name="Galibert F."/>
            <person name="Finan T.M."/>
            <person name="Long S.R."/>
            <person name="Puehler A."/>
            <person name="Abola P."/>
            <person name="Ampe F."/>
            <person name="Barloy-Hubler F."/>
            <person name="Barnett M.J."/>
            <person name="Becker A."/>
            <person name="Boistard P."/>
            <person name="Bothe G."/>
            <person name="Boutry M."/>
            <person name="Bowser L."/>
            <person name="Buhrmester J."/>
            <person name="Cadieu E."/>
            <person name="Capela D."/>
            <person name="Chain P."/>
            <person name="Cowie A."/>
            <person name="Davis R.W."/>
            <person name="Dreano S."/>
            <person name="Federspiel N.A."/>
            <person name="Fisher R.F."/>
            <person name="Gloux S."/>
            <person name="Godrie T."/>
            <person name="Goffeau A."/>
            <person name="Golding B."/>
            <person name="Gouzy J."/>
            <person name="Gurjal M."/>
            <person name="Hernandez-Lucas I."/>
            <person name="Hong A."/>
            <person name="Huizar L."/>
            <person name="Hyman R.W."/>
            <person name="Jones T."/>
            <person name="Kahn D."/>
            <person name="Kahn M.L."/>
            <person name="Kalman S."/>
            <person name="Keating D.H."/>
            <person name="Kiss E."/>
            <person name="Komp C."/>
            <person name="Lelaure V."/>
            <person name="Masuy D."/>
            <person name="Palm C."/>
            <person name="Peck M.C."/>
            <person name="Pohl T.M."/>
            <person name="Portetelle D."/>
            <person name="Purnelle B."/>
            <person name="Ramsperger U."/>
            <person name="Surzycki R."/>
            <person name="Thebault P."/>
            <person name="Vandenbol M."/>
            <person name="Vorhoelter F.J."/>
            <person name="Weidner S."/>
            <person name="Wells D.H."/>
            <person name="Wong K."/>
            <person name="Yeh K.-C."/>
            <person name="Batut J."/>
        </authorList>
    </citation>
    <scope>NUCLEOTIDE SEQUENCE [LARGE SCALE GENOMIC DNA]</scope>
    <source>
        <strain>1021</strain>
    </source>
</reference>
<comment type="function">
    <text evidence="1">Essential cell division protein that forms a contractile ring structure (Z ring) at the future cell division site. The regulation of the ring assembly controls the timing and the location of cell division. One of the functions of the FtsZ ring is to recruit other cell division proteins to the septum to produce a new cell wall between the dividing cells. Binds GTP and shows GTPase activity.</text>
</comment>
<comment type="subunit">
    <text evidence="1">Homodimer. Polymerizes to form a dynamic ring structure in a strictly GTP-dependent manner. Interacts directly with several other division proteins.</text>
</comment>
<comment type="subcellular location">
    <subcellularLocation>
        <location evidence="1">Cytoplasm</location>
    </subcellularLocation>
    <text evidence="1">Assembles at midcell at the inner surface of the cytoplasmic membrane.</text>
</comment>
<comment type="similarity">
    <text evidence="1">Belongs to the FtsZ family.</text>
</comment>
<sequence>MAINLQKPDITELKPRITVFGVGGGGGNAVNNMITAGLQGVDFVVANTDAQALTMTKAERIIQMGVAVTEGLGAGSQPEVGRAAAEECIDEIIDHLQGTHMCFVTAGMGGGTGTGAAPIVAQAARNKGILTVGVVTKPFHFEGGRRMRIADQGISDLQKSVDTLIVIPNQNLFRIANDKTTFADAFAMADQVLYSGVACITDLMVKEGLINLDFADVRSVMREMGRAMMGTGEASGEGRAMAAAEAAIANPLLDETSMKGAQGLLISITGGRDLTLFEVDEAATRIREEVDPDANIILGATFDEELEGLIRVSVVATGIDRTAAEVAGRSADFRPVAPKPIVRPSAAVPAQPQPTVSLQPVPQPQPVQQPLQQQNVDHIALAIREAEMERELDIAARAQVAAPAPQPQPHLQEEAFRPQSKLFAGVAPTEAAPVMRPAQPAPRPVEMQAPVQPQMQAQPVQQEPTQVVRQQAEPVRMPKVEDFPPVVKAEMDYRTQPAPAHQEERGPMGLLNRITSSLGLREREATNVSSDMTAAAPSAASQQRRPLSPEASLYAPRRGQLDDHGRAAPQMRSHEDDQLEIPAFLRRQSS</sequence>
<gene>
    <name evidence="1" type="primary">ftsZ1</name>
    <name type="ordered locus">R02168</name>
    <name type="ORF">SMc01874</name>
</gene>
<accession>P30327</accession>
<protein>
    <recommendedName>
        <fullName evidence="1">Cell division protein FtsZ 1</fullName>
    </recommendedName>
</protein>
<dbReference type="EMBL" id="AF024660">
    <property type="protein sequence ID" value="AAC45824.1"/>
    <property type="molecule type" value="Genomic_DNA"/>
</dbReference>
<dbReference type="EMBL" id="AL591688">
    <property type="protein sequence ID" value="CAC46747.1"/>
    <property type="molecule type" value="Genomic_DNA"/>
</dbReference>
<dbReference type="PIR" id="A38119">
    <property type="entry name" value="A38119"/>
</dbReference>
<dbReference type="RefSeq" id="NP_386274.1">
    <property type="nucleotide sequence ID" value="NC_003047.1"/>
</dbReference>
<dbReference type="SMR" id="P30327"/>
<dbReference type="EnsemblBacteria" id="CAC46747">
    <property type="protein sequence ID" value="CAC46747"/>
    <property type="gene ID" value="SMc01874"/>
</dbReference>
<dbReference type="KEGG" id="sme:SMc01874"/>
<dbReference type="PATRIC" id="fig|266834.11.peg.3634"/>
<dbReference type="eggNOG" id="COG0206">
    <property type="taxonomic scope" value="Bacteria"/>
</dbReference>
<dbReference type="HOGENOM" id="CLU_024865_5_1_5"/>
<dbReference type="OrthoDB" id="9813375at2"/>
<dbReference type="Proteomes" id="UP000001976">
    <property type="component" value="Chromosome"/>
</dbReference>
<dbReference type="GO" id="GO:0032153">
    <property type="term" value="C:cell division site"/>
    <property type="evidence" value="ECO:0007669"/>
    <property type="project" value="UniProtKB-UniRule"/>
</dbReference>
<dbReference type="GO" id="GO:0005737">
    <property type="term" value="C:cytoplasm"/>
    <property type="evidence" value="ECO:0007669"/>
    <property type="project" value="UniProtKB-SubCell"/>
</dbReference>
<dbReference type="GO" id="GO:0005525">
    <property type="term" value="F:GTP binding"/>
    <property type="evidence" value="ECO:0007669"/>
    <property type="project" value="UniProtKB-UniRule"/>
</dbReference>
<dbReference type="GO" id="GO:0003924">
    <property type="term" value="F:GTPase activity"/>
    <property type="evidence" value="ECO:0007669"/>
    <property type="project" value="UniProtKB-UniRule"/>
</dbReference>
<dbReference type="GO" id="GO:0000917">
    <property type="term" value="P:division septum assembly"/>
    <property type="evidence" value="ECO:0007669"/>
    <property type="project" value="UniProtKB-KW"/>
</dbReference>
<dbReference type="GO" id="GO:0043093">
    <property type="term" value="P:FtsZ-dependent cytokinesis"/>
    <property type="evidence" value="ECO:0007669"/>
    <property type="project" value="UniProtKB-UniRule"/>
</dbReference>
<dbReference type="GO" id="GO:0051258">
    <property type="term" value="P:protein polymerization"/>
    <property type="evidence" value="ECO:0007669"/>
    <property type="project" value="UniProtKB-UniRule"/>
</dbReference>
<dbReference type="CDD" id="cd02201">
    <property type="entry name" value="FtsZ_type1"/>
    <property type="match status" value="1"/>
</dbReference>
<dbReference type="FunFam" id="3.30.1330.20:FF:000011">
    <property type="entry name" value="Cell division protein FtsZ"/>
    <property type="match status" value="1"/>
</dbReference>
<dbReference type="FunFam" id="3.40.50.1440:FF:000001">
    <property type="entry name" value="Cell division protein FtsZ"/>
    <property type="match status" value="1"/>
</dbReference>
<dbReference type="Gene3D" id="3.30.1330.20">
    <property type="entry name" value="Tubulin/FtsZ, C-terminal domain"/>
    <property type="match status" value="1"/>
</dbReference>
<dbReference type="Gene3D" id="3.40.50.1440">
    <property type="entry name" value="Tubulin/FtsZ, GTPase domain"/>
    <property type="match status" value="1"/>
</dbReference>
<dbReference type="HAMAP" id="MF_00909">
    <property type="entry name" value="FtsZ"/>
    <property type="match status" value="1"/>
</dbReference>
<dbReference type="InterPro" id="IPR000158">
    <property type="entry name" value="Cell_div_FtsZ"/>
</dbReference>
<dbReference type="InterPro" id="IPR017844">
    <property type="entry name" value="Cell_div_FtsZ_C"/>
</dbReference>
<dbReference type="InterPro" id="IPR020805">
    <property type="entry name" value="Cell_div_FtsZ_CS"/>
</dbReference>
<dbReference type="InterPro" id="IPR045061">
    <property type="entry name" value="FtsZ/CetZ"/>
</dbReference>
<dbReference type="InterPro" id="IPR024757">
    <property type="entry name" value="FtsZ_C"/>
</dbReference>
<dbReference type="InterPro" id="IPR008280">
    <property type="entry name" value="Tub_FtsZ_C"/>
</dbReference>
<dbReference type="InterPro" id="IPR037103">
    <property type="entry name" value="Tubulin/FtsZ-like_C"/>
</dbReference>
<dbReference type="InterPro" id="IPR018316">
    <property type="entry name" value="Tubulin/FtsZ_2-layer-sand-dom"/>
</dbReference>
<dbReference type="InterPro" id="IPR036525">
    <property type="entry name" value="Tubulin/FtsZ_GTPase_sf"/>
</dbReference>
<dbReference type="InterPro" id="IPR003008">
    <property type="entry name" value="Tubulin_FtsZ_GTPase"/>
</dbReference>
<dbReference type="NCBIfam" id="TIGR00065">
    <property type="entry name" value="ftsZ"/>
    <property type="match status" value="1"/>
</dbReference>
<dbReference type="NCBIfam" id="TIGR03483">
    <property type="entry name" value="FtsZ_alphas_C"/>
    <property type="match status" value="1"/>
</dbReference>
<dbReference type="PANTHER" id="PTHR30314">
    <property type="entry name" value="CELL DIVISION PROTEIN FTSZ-RELATED"/>
    <property type="match status" value="1"/>
</dbReference>
<dbReference type="PANTHER" id="PTHR30314:SF3">
    <property type="entry name" value="MITOCHONDRIAL DIVISION PROTEIN FSZA"/>
    <property type="match status" value="1"/>
</dbReference>
<dbReference type="Pfam" id="PF12327">
    <property type="entry name" value="FtsZ_C"/>
    <property type="match status" value="1"/>
</dbReference>
<dbReference type="Pfam" id="PF00091">
    <property type="entry name" value="Tubulin"/>
    <property type="match status" value="1"/>
</dbReference>
<dbReference type="PRINTS" id="PR00423">
    <property type="entry name" value="CELLDVISFTSZ"/>
</dbReference>
<dbReference type="SMART" id="SM00864">
    <property type="entry name" value="Tubulin"/>
    <property type="match status" value="1"/>
</dbReference>
<dbReference type="SMART" id="SM00865">
    <property type="entry name" value="Tubulin_C"/>
    <property type="match status" value="1"/>
</dbReference>
<dbReference type="SUPFAM" id="SSF55307">
    <property type="entry name" value="Tubulin C-terminal domain-like"/>
    <property type="match status" value="1"/>
</dbReference>
<dbReference type="SUPFAM" id="SSF52490">
    <property type="entry name" value="Tubulin nucleotide-binding domain-like"/>
    <property type="match status" value="1"/>
</dbReference>
<dbReference type="PROSITE" id="PS01134">
    <property type="entry name" value="FTSZ_1"/>
    <property type="match status" value="1"/>
</dbReference>
<dbReference type="PROSITE" id="PS01135">
    <property type="entry name" value="FTSZ_2"/>
    <property type="match status" value="1"/>
</dbReference>
<evidence type="ECO:0000255" key="1">
    <source>
        <dbReference type="HAMAP-Rule" id="MF_00909"/>
    </source>
</evidence>
<evidence type="ECO:0000256" key="2">
    <source>
        <dbReference type="SAM" id="MobiDB-lite"/>
    </source>
</evidence>
<name>FTSZ1_RHIME</name>
<feature type="chain" id="PRO_0000114373" description="Cell division protein FtsZ 1">
    <location>
        <begin position="1"/>
        <end position="590"/>
    </location>
</feature>
<feature type="region of interest" description="Disordered" evidence="2">
    <location>
        <begin position="346"/>
        <end position="372"/>
    </location>
</feature>
<feature type="region of interest" description="Disordered" evidence="2">
    <location>
        <begin position="524"/>
        <end position="590"/>
    </location>
</feature>
<feature type="compositionally biased region" description="Low complexity" evidence="2">
    <location>
        <begin position="534"/>
        <end position="546"/>
    </location>
</feature>
<feature type="compositionally biased region" description="Basic and acidic residues" evidence="2">
    <location>
        <begin position="559"/>
        <end position="576"/>
    </location>
</feature>
<feature type="binding site" evidence="1">
    <location>
        <begin position="24"/>
        <end position="28"/>
    </location>
    <ligand>
        <name>GTP</name>
        <dbReference type="ChEBI" id="CHEBI:37565"/>
    </ligand>
</feature>
<feature type="binding site" evidence="1">
    <location>
        <begin position="111"/>
        <end position="113"/>
    </location>
    <ligand>
        <name>GTP</name>
        <dbReference type="ChEBI" id="CHEBI:37565"/>
    </ligand>
</feature>
<feature type="binding site" evidence="1">
    <location>
        <position position="142"/>
    </location>
    <ligand>
        <name>GTP</name>
        <dbReference type="ChEBI" id="CHEBI:37565"/>
    </ligand>
</feature>
<feature type="binding site" evidence="1">
    <location>
        <position position="146"/>
    </location>
    <ligand>
        <name>GTP</name>
        <dbReference type="ChEBI" id="CHEBI:37565"/>
    </ligand>
</feature>
<feature type="binding site" evidence="1">
    <location>
        <position position="190"/>
    </location>
    <ligand>
        <name>GTP</name>
        <dbReference type="ChEBI" id="CHEBI:37565"/>
    </ligand>
</feature>
<keyword id="KW-0131">Cell cycle</keyword>
<keyword id="KW-0132">Cell division</keyword>
<keyword id="KW-0963">Cytoplasm</keyword>
<keyword id="KW-0342">GTP-binding</keyword>
<keyword id="KW-0547">Nucleotide-binding</keyword>
<keyword id="KW-1185">Reference proteome</keyword>
<keyword id="KW-0717">Septation</keyword>